<feature type="chain" id="PRO_1000013345" description="Large ribosomal subunit protein bL34">
    <location>
        <begin position="1"/>
        <end position="44"/>
    </location>
</feature>
<feature type="region of interest" description="Disordered" evidence="2">
    <location>
        <begin position="1"/>
        <end position="44"/>
    </location>
</feature>
<feature type="compositionally biased region" description="Basic residues" evidence="2">
    <location>
        <begin position="1"/>
        <end position="19"/>
    </location>
</feature>
<feature type="compositionally biased region" description="Basic residues" evidence="2">
    <location>
        <begin position="26"/>
        <end position="44"/>
    </location>
</feature>
<proteinExistence type="inferred from homology"/>
<reference key="1">
    <citation type="journal article" date="2007" name="Proc. Natl. Acad. Sci. U.S.A.">
        <title>Genome and proteome of long-chain alkane degrading Geobacillus thermodenitrificans NG80-2 isolated from a deep-subsurface oil reservoir.</title>
        <authorList>
            <person name="Feng L."/>
            <person name="Wang W."/>
            <person name="Cheng J."/>
            <person name="Ren Y."/>
            <person name="Zhao G."/>
            <person name="Gao C."/>
            <person name="Tang Y."/>
            <person name="Liu X."/>
            <person name="Han W."/>
            <person name="Peng X."/>
            <person name="Liu R."/>
            <person name="Wang L."/>
        </authorList>
    </citation>
    <scope>NUCLEOTIDE SEQUENCE [LARGE SCALE GENOMIC DNA]</scope>
    <source>
        <strain>NG80-2</strain>
    </source>
</reference>
<gene>
    <name evidence="1" type="primary">rpmH</name>
    <name type="ordered locus">GTNG_3444</name>
</gene>
<evidence type="ECO:0000255" key="1">
    <source>
        <dbReference type="HAMAP-Rule" id="MF_00391"/>
    </source>
</evidence>
<evidence type="ECO:0000256" key="2">
    <source>
        <dbReference type="SAM" id="MobiDB-lite"/>
    </source>
</evidence>
<evidence type="ECO:0000305" key="3"/>
<accession>A4ITX5</accession>
<organism>
    <name type="scientific">Geobacillus thermodenitrificans (strain NG80-2)</name>
    <dbReference type="NCBI Taxonomy" id="420246"/>
    <lineage>
        <taxon>Bacteria</taxon>
        <taxon>Bacillati</taxon>
        <taxon>Bacillota</taxon>
        <taxon>Bacilli</taxon>
        <taxon>Bacillales</taxon>
        <taxon>Anoxybacillaceae</taxon>
        <taxon>Geobacillus</taxon>
    </lineage>
</organism>
<dbReference type="EMBL" id="CP000557">
    <property type="protein sequence ID" value="ABO68779.1"/>
    <property type="molecule type" value="Genomic_DNA"/>
</dbReference>
<dbReference type="RefSeq" id="WP_003397591.1">
    <property type="nucleotide sequence ID" value="NC_009328.1"/>
</dbReference>
<dbReference type="SMR" id="A4ITX5"/>
<dbReference type="GeneID" id="93258037"/>
<dbReference type="KEGG" id="gtn:GTNG_3444"/>
<dbReference type="eggNOG" id="COG0230">
    <property type="taxonomic scope" value="Bacteria"/>
</dbReference>
<dbReference type="HOGENOM" id="CLU_129938_2_0_9"/>
<dbReference type="Proteomes" id="UP000001578">
    <property type="component" value="Chromosome"/>
</dbReference>
<dbReference type="GO" id="GO:1990904">
    <property type="term" value="C:ribonucleoprotein complex"/>
    <property type="evidence" value="ECO:0007669"/>
    <property type="project" value="UniProtKB-KW"/>
</dbReference>
<dbReference type="GO" id="GO:0005840">
    <property type="term" value="C:ribosome"/>
    <property type="evidence" value="ECO:0007669"/>
    <property type="project" value="UniProtKB-KW"/>
</dbReference>
<dbReference type="GO" id="GO:0003735">
    <property type="term" value="F:structural constituent of ribosome"/>
    <property type="evidence" value="ECO:0007669"/>
    <property type="project" value="InterPro"/>
</dbReference>
<dbReference type="GO" id="GO:0006412">
    <property type="term" value="P:translation"/>
    <property type="evidence" value="ECO:0007669"/>
    <property type="project" value="UniProtKB-UniRule"/>
</dbReference>
<dbReference type="FunFam" id="1.10.287.3980:FF:000001">
    <property type="entry name" value="Mitochondrial ribosomal protein L34"/>
    <property type="match status" value="1"/>
</dbReference>
<dbReference type="Gene3D" id="1.10.287.3980">
    <property type="match status" value="1"/>
</dbReference>
<dbReference type="HAMAP" id="MF_00391">
    <property type="entry name" value="Ribosomal_bL34"/>
    <property type="match status" value="1"/>
</dbReference>
<dbReference type="InterPro" id="IPR000271">
    <property type="entry name" value="Ribosomal_bL34"/>
</dbReference>
<dbReference type="InterPro" id="IPR020939">
    <property type="entry name" value="Ribosomal_bL34_CS"/>
</dbReference>
<dbReference type="NCBIfam" id="TIGR01030">
    <property type="entry name" value="rpmH_bact"/>
    <property type="match status" value="1"/>
</dbReference>
<dbReference type="PANTHER" id="PTHR14503:SF4">
    <property type="entry name" value="LARGE RIBOSOMAL SUBUNIT PROTEIN BL34M"/>
    <property type="match status" value="1"/>
</dbReference>
<dbReference type="PANTHER" id="PTHR14503">
    <property type="entry name" value="MITOCHONDRIAL RIBOSOMAL PROTEIN 34 FAMILY MEMBER"/>
    <property type="match status" value="1"/>
</dbReference>
<dbReference type="Pfam" id="PF00468">
    <property type="entry name" value="Ribosomal_L34"/>
    <property type="match status" value="1"/>
</dbReference>
<dbReference type="PROSITE" id="PS00784">
    <property type="entry name" value="RIBOSOMAL_L34"/>
    <property type="match status" value="1"/>
</dbReference>
<sequence>MKRTYQPNKRKRSKVHGFRARMSTKNGRKVLARRRRKGRKVLSA</sequence>
<protein>
    <recommendedName>
        <fullName evidence="1">Large ribosomal subunit protein bL34</fullName>
    </recommendedName>
    <alternativeName>
        <fullName evidence="3">50S ribosomal protein L34</fullName>
    </alternativeName>
</protein>
<keyword id="KW-0687">Ribonucleoprotein</keyword>
<keyword id="KW-0689">Ribosomal protein</keyword>
<comment type="similarity">
    <text evidence="1">Belongs to the bacterial ribosomal protein bL34 family.</text>
</comment>
<name>RL34_GEOTN</name>